<name>MURA_BLOPB</name>
<protein>
    <recommendedName>
        <fullName evidence="1">UDP-N-acetylglucosamine 1-carboxyvinyltransferase</fullName>
        <ecNumber evidence="1">2.5.1.7</ecNumber>
    </recommendedName>
    <alternativeName>
        <fullName evidence="1">Enoylpyruvate transferase</fullName>
    </alternativeName>
    <alternativeName>
        <fullName evidence="1">UDP-N-acetylglucosamine enolpyruvyl transferase</fullName>
        <shortName evidence="1">EPT</shortName>
    </alternativeName>
</protein>
<keyword id="KW-0131">Cell cycle</keyword>
<keyword id="KW-0132">Cell division</keyword>
<keyword id="KW-0133">Cell shape</keyword>
<keyword id="KW-0961">Cell wall biogenesis/degradation</keyword>
<keyword id="KW-0963">Cytoplasm</keyword>
<keyword id="KW-0573">Peptidoglycan synthesis</keyword>
<keyword id="KW-0670">Pyruvate</keyword>
<keyword id="KW-1185">Reference proteome</keyword>
<keyword id="KW-0808">Transferase</keyword>
<organism>
    <name type="scientific">Blochmanniella pennsylvanica (strain BPEN)</name>
    <dbReference type="NCBI Taxonomy" id="291272"/>
    <lineage>
        <taxon>Bacteria</taxon>
        <taxon>Pseudomonadati</taxon>
        <taxon>Pseudomonadota</taxon>
        <taxon>Gammaproteobacteria</taxon>
        <taxon>Enterobacterales</taxon>
        <taxon>Enterobacteriaceae</taxon>
        <taxon>ant endosymbionts</taxon>
        <taxon>Candidatus Blochmanniella</taxon>
    </lineage>
</organism>
<dbReference type="EC" id="2.5.1.7" evidence="1"/>
<dbReference type="EMBL" id="CP000016">
    <property type="protein sequence ID" value="AAZ40695.1"/>
    <property type="molecule type" value="Genomic_DNA"/>
</dbReference>
<dbReference type="SMR" id="Q493Y9"/>
<dbReference type="STRING" id="291272.BPEN_047"/>
<dbReference type="KEGG" id="bpn:BPEN_047"/>
<dbReference type="eggNOG" id="COG0766">
    <property type="taxonomic scope" value="Bacteria"/>
</dbReference>
<dbReference type="HOGENOM" id="CLU_027387_0_0_6"/>
<dbReference type="OrthoDB" id="9803760at2"/>
<dbReference type="UniPathway" id="UPA00219"/>
<dbReference type="Proteomes" id="UP000007794">
    <property type="component" value="Chromosome"/>
</dbReference>
<dbReference type="GO" id="GO:0005737">
    <property type="term" value="C:cytoplasm"/>
    <property type="evidence" value="ECO:0007669"/>
    <property type="project" value="UniProtKB-SubCell"/>
</dbReference>
<dbReference type="GO" id="GO:0008760">
    <property type="term" value="F:UDP-N-acetylglucosamine 1-carboxyvinyltransferase activity"/>
    <property type="evidence" value="ECO:0007669"/>
    <property type="project" value="UniProtKB-UniRule"/>
</dbReference>
<dbReference type="GO" id="GO:0051301">
    <property type="term" value="P:cell division"/>
    <property type="evidence" value="ECO:0007669"/>
    <property type="project" value="UniProtKB-KW"/>
</dbReference>
<dbReference type="GO" id="GO:0071555">
    <property type="term" value="P:cell wall organization"/>
    <property type="evidence" value="ECO:0007669"/>
    <property type="project" value="UniProtKB-KW"/>
</dbReference>
<dbReference type="GO" id="GO:0009252">
    <property type="term" value="P:peptidoglycan biosynthetic process"/>
    <property type="evidence" value="ECO:0007669"/>
    <property type="project" value="UniProtKB-UniRule"/>
</dbReference>
<dbReference type="GO" id="GO:0008360">
    <property type="term" value="P:regulation of cell shape"/>
    <property type="evidence" value="ECO:0007669"/>
    <property type="project" value="UniProtKB-KW"/>
</dbReference>
<dbReference type="GO" id="GO:0019277">
    <property type="term" value="P:UDP-N-acetylgalactosamine biosynthetic process"/>
    <property type="evidence" value="ECO:0007669"/>
    <property type="project" value="InterPro"/>
</dbReference>
<dbReference type="CDD" id="cd01555">
    <property type="entry name" value="UdpNAET"/>
    <property type="match status" value="1"/>
</dbReference>
<dbReference type="FunFam" id="3.65.10.10:FF:000001">
    <property type="entry name" value="UDP-N-acetylglucosamine 1-carboxyvinyltransferase"/>
    <property type="match status" value="1"/>
</dbReference>
<dbReference type="Gene3D" id="3.65.10.10">
    <property type="entry name" value="Enolpyruvate transferase domain"/>
    <property type="match status" value="2"/>
</dbReference>
<dbReference type="HAMAP" id="MF_00111">
    <property type="entry name" value="MurA"/>
    <property type="match status" value="1"/>
</dbReference>
<dbReference type="InterPro" id="IPR001986">
    <property type="entry name" value="Enolpyruvate_Tfrase_dom"/>
</dbReference>
<dbReference type="InterPro" id="IPR036968">
    <property type="entry name" value="Enolpyruvate_Tfrase_sf"/>
</dbReference>
<dbReference type="InterPro" id="IPR050068">
    <property type="entry name" value="MurA_subfamily"/>
</dbReference>
<dbReference type="InterPro" id="IPR013792">
    <property type="entry name" value="RNA3'P_cycl/enolpyr_Trfase_a/b"/>
</dbReference>
<dbReference type="InterPro" id="IPR005750">
    <property type="entry name" value="UDP_GlcNAc_COvinyl_MurA"/>
</dbReference>
<dbReference type="NCBIfam" id="TIGR01072">
    <property type="entry name" value="murA"/>
    <property type="match status" value="1"/>
</dbReference>
<dbReference type="NCBIfam" id="NF006873">
    <property type="entry name" value="PRK09369.1"/>
    <property type="match status" value="1"/>
</dbReference>
<dbReference type="PANTHER" id="PTHR43783">
    <property type="entry name" value="UDP-N-ACETYLGLUCOSAMINE 1-CARBOXYVINYLTRANSFERASE"/>
    <property type="match status" value="1"/>
</dbReference>
<dbReference type="PANTHER" id="PTHR43783:SF1">
    <property type="entry name" value="UDP-N-ACETYLGLUCOSAMINE 1-CARBOXYVINYLTRANSFERASE"/>
    <property type="match status" value="1"/>
</dbReference>
<dbReference type="Pfam" id="PF00275">
    <property type="entry name" value="EPSP_synthase"/>
    <property type="match status" value="1"/>
</dbReference>
<dbReference type="SUPFAM" id="SSF55205">
    <property type="entry name" value="EPT/RTPC-like"/>
    <property type="match status" value="1"/>
</dbReference>
<proteinExistence type="inferred from homology"/>
<accession>Q493Y9</accession>
<sequence length="421" mass="45490">MTVDRFYIHGPTPLSGEVNISGAKNSALPILFATLLTEEPVEIFNVPKLKDIDVTIKLLTQLGAKVDHCDVVFVDTSSVNTCCASYDLVKSMRASIWALGPLVARFGEGKIWLPGGCSIGKRLVDLHVNGLEQLGATIILEEEYVTASVNGRLHGAHIIMDKISVGATVTIMSAAALAEGVTIIDNAAREPEIVDTANFLIMLGTNINGAGSNRITIEGAQKLGGGKYSIMPDRIETGTFLVAAAVSRTNVVCLGSRPDTLRFVIKKLRESGADINMGKDWIGLNMHGKRPKAVTVCTKPYPGFPTDMQAQFTLLNIVSKGKGKIIETIFENRFMHVPELVRMGARIKILNNMIVCHGVDSLIGTQVMATDLRASASLVLAGCIAEGLTIVDCVYHIDRGYDHIEKKLRNMGAHIKRVTNK</sequence>
<gene>
    <name evidence="1" type="primary">murA</name>
    <name type="ordered locus">BPEN_047</name>
</gene>
<comment type="function">
    <text evidence="1">Cell wall formation. Adds enolpyruvyl to UDP-N-acetylglucosamine.</text>
</comment>
<comment type="catalytic activity">
    <reaction evidence="1">
        <text>phosphoenolpyruvate + UDP-N-acetyl-alpha-D-glucosamine = UDP-N-acetyl-3-O-(1-carboxyvinyl)-alpha-D-glucosamine + phosphate</text>
        <dbReference type="Rhea" id="RHEA:18681"/>
        <dbReference type="ChEBI" id="CHEBI:43474"/>
        <dbReference type="ChEBI" id="CHEBI:57705"/>
        <dbReference type="ChEBI" id="CHEBI:58702"/>
        <dbReference type="ChEBI" id="CHEBI:68483"/>
        <dbReference type="EC" id="2.5.1.7"/>
    </reaction>
</comment>
<comment type="pathway">
    <text evidence="1">Cell wall biogenesis; peptidoglycan biosynthesis.</text>
</comment>
<comment type="subcellular location">
    <subcellularLocation>
        <location evidence="1">Cytoplasm</location>
    </subcellularLocation>
</comment>
<comment type="similarity">
    <text evidence="1">Belongs to the EPSP synthase family. MurA subfamily.</text>
</comment>
<evidence type="ECO:0000255" key="1">
    <source>
        <dbReference type="HAMAP-Rule" id="MF_00111"/>
    </source>
</evidence>
<feature type="chain" id="PRO_0000231173" description="UDP-N-acetylglucosamine 1-carboxyvinyltransferase">
    <location>
        <begin position="1"/>
        <end position="421"/>
    </location>
</feature>
<feature type="active site" description="Proton donor" evidence="1">
    <location>
        <position position="117"/>
    </location>
</feature>
<feature type="binding site" evidence="1">
    <location>
        <begin position="24"/>
        <end position="25"/>
    </location>
    <ligand>
        <name>phosphoenolpyruvate</name>
        <dbReference type="ChEBI" id="CHEBI:58702"/>
    </ligand>
</feature>
<feature type="binding site" evidence="1">
    <location>
        <position position="93"/>
    </location>
    <ligand>
        <name>UDP-N-acetyl-alpha-D-glucosamine</name>
        <dbReference type="ChEBI" id="CHEBI:57705"/>
    </ligand>
</feature>
<feature type="binding site" evidence="1">
    <location>
        <position position="307"/>
    </location>
    <ligand>
        <name>UDP-N-acetyl-alpha-D-glucosamine</name>
        <dbReference type="ChEBI" id="CHEBI:57705"/>
    </ligand>
</feature>
<feature type="binding site" evidence="1">
    <location>
        <position position="329"/>
    </location>
    <ligand>
        <name>UDP-N-acetyl-alpha-D-glucosamine</name>
        <dbReference type="ChEBI" id="CHEBI:57705"/>
    </ligand>
</feature>
<feature type="modified residue" description="2-(S-cysteinyl)pyruvic acid O-phosphothioketal" evidence="1">
    <location>
        <position position="117"/>
    </location>
</feature>
<reference key="1">
    <citation type="journal article" date="2005" name="Genome Res.">
        <title>Genome sequence of Blochmannia pennsylvanicus indicates parallel evolutionary trends among bacterial mutualists of insects.</title>
        <authorList>
            <person name="Degnan P.H."/>
            <person name="Lazarus A.B."/>
            <person name="Wernegreen J.J."/>
        </authorList>
    </citation>
    <scope>NUCLEOTIDE SEQUENCE [LARGE SCALE GENOMIC DNA]</scope>
    <source>
        <strain>BPEN</strain>
    </source>
</reference>